<evidence type="ECO:0000250" key="1">
    <source>
        <dbReference type="UniProtKB" id="P26394"/>
    </source>
</evidence>
<evidence type="ECO:0000250" key="2">
    <source>
        <dbReference type="UniProtKB" id="Q5SFD1"/>
    </source>
</evidence>
<evidence type="ECO:0000269" key="3">
    <source>
    </source>
</evidence>
<evidence type="ECO:0000269" key="4">
    <source ref="3"/>
</evidence>
<evidence type="ECO:0000303" key="5">
    <source>
    </source>
</evidence>
<evidence type="ECO:0000305" key="6"/>
<evidence type="ECO:0000305" key="7">
    <source>
    </source>
</evidence>
<evidence type="ECO:0000305" key="8">
    <source ref="3"/>
</evidence>
<evidence type="ECO:0007744" key="9">
    <source>
        <dbReference type="PDB" id="1RTV"/>
    </source>
</evidence>
<evidence type="ECO:0007744" key="10">
    <source>
        <dbReference type="PDB" id="2IXH"/>
    </source>
</evidence>
<evidence type="ECO:0007744" key="11">
    <source>
        <dbReference type="PDB" id="2IXI"/>
    </source>
</evidence>
<evidence type="ECO:0007744" key="12">
    <source>
        <dbReference type="PDB" id="2IXJ"/>
    </source>
</evidence>
<evidence type="ECO:0007744" key="13">
    <source>
        <dbReference type="PDB" id="2IXK"/>
    </source>
</evidence>
<evidence type="ECO:0007829" key="14">
    <source>
        <dbReference type="PDB" id="2IXK"/>
    </source>
</evidence>
<proteinExistence type="evidence at protein level"/>
<gene>
    <name type="primary">rmlC</name>
    <name type="ordered locus">PA5164</name>
</gene>
<dbReference type="EC" id="5.1.3.13" evidence="7"/>
<dbReference type="EMBL" id="AJ298594">
    <property type="protein sequence ID" value="CAC82199.1"/>
    <property type="molecule type" value="Genomic_DNA"/>
</dbReference>
<dbReference type="EMBL" id="AE004091">
    <property type="protein sequence ID" value="AAG08549.1"/>
    <property type="molecule type" value="Genomic_DNA"/>
</dbReference>
<dbReference type="PIR" id="E83000">
    <property type="entry name" value="E83000"/>
</dbReference>
<dbReference type="RefSeq" id="NP_253851.1">
    <property type="nucleotide sequence ID" value="NC_002516.2"/>
</dbReference>
<dbReference type="PDB" id="1RTV">
    <property type="method" value="X-ray"/>
    <property type="resolution" value="2.50 A"/>
    <property type="chains" value="A=1-181"/>
</dbReference>
<dbReference type="PDB" id="2IXH">
    <property type="method" value="X-ray"/>
    <property type="resolution" value="2.00 A"/>
    <property type="chains" value="A/B=1-181"/>
</dbReference>
<dbReference type="PDB" id="2IXI">
    <property type="method" value="X-ray"/>
    <property type="resolution" value="1.80 A"/>
    <property type="chains" value="A/B=1-181"/>
</dbReference>
<dbReference type="PDB" id="2IXJ">
    <property type="method" value="X-ray"/>
    <property type="resolution" value="2.54 A"/>
    <property type="chains" value="A=1-181"/>
</dbReference>
<dbReference type="PDB" id="2IXK">
    <property type="method" value="X-ray"/>
    <property type="resolution" value="1.70 A"/>
    <property type="chains" value="A/B=1-181"/>
</dbReference>
<dbReference type="PDBsum" id="1RTV"/>
<dbReference type="PDBsum" id="2IXH"/>
<dbReference type="PDBsum" id="2IXI"/>
<dbReference type="PDBsum" id="2IXJ"/>
<dbReference type="PDBsum" id="2IXK"/>
<dbReference type="SMR" id="Q9HU21"/>
<dbReference type="FunCoup" id="Q9HU21">
    <property type="interactions" value="416"/>
</dbReference>
<dbReference type="STRING" id="208964.PA5164"/>
<dbReference type="DrugBank" id="DB01694">
    <property type="generic name" value="D-tartaric acid"/>
</dbReference>
<dbReference type="PaxDb" id="208964-PA5164"/>
<dbReference type="DNASU" id="879991"/>
<dbReference type="GeneID" id="879991"/>
<dbReference type="KEGG" id="pae:PA5164"/>
<dbReference type="PATRIC" id="fig|208964.12.peg.5412"/>
<dbReference type="PseudoCAP" id="PA5164"/>
<dbReference type="HOGENOM" id="CLU_090940_1_1_6"/>
<dbReference type="InParanoid" id="Q9HU21"/>
<dbReference type="OrthoDB" id="9800680at2"/>
<dbReference type="PhylomeDB" id="Q9HU21"/>
<dbReference type="BioCyc" id="PAER208964:G1FZ6-5281-MONOMER"/>
<dbReference type="UniPathway" id="UPA00030"/>
<dbReference type="UniPathway" id="UPA00124"/>
<dbReference type="EvolutionaryTrace" id="Q9HU21"/>
<dbReference type="Proteomes" id="UP000002438">
    <property type="component" value="Chromosome"/>
</dbReference>
<dbReference type="GO" id="GO:0005829">
    <property type="term" value="C:cytosol"/>
    <property type="evidence" value="ECO:0000318"/>
    <property type="project" value="GO_Central"/>
</dbReference>
<dbReference type="GO" id="GO:0008830">
    <property type="term" value="F:dTDP-4-dehydrorhamnose 3,5-epimerase activity"/>
    <property type="evidence" value="ECO:0000314"/>
    <property type="project" value="UniProtKB"/>
</dbReference>
<dbReference type="GO" id="GO:0019305">
    <property type="term" value="P:dTDP-rhamnose biosynthetic process"/>
    <property type="evidence" value="ECO:0000314"/>
    <property type="project" value="PseudoCAP"/>
</dbReference>
<dbReference type="GO" id="GO:0009103">
    <property type="term" value="P:lipopolysaccharide biosynthetic process"/>
    <property type="evidence" value="ECO:0000314"/>
    <property type="project" value="UniProtKB"/>
</dbReference>
<dbReference type="GO" id="GO:0009244">
    <property type="term" value="P:lipopolysaccharide core region biosynthetic process"/>
    <property type="evidence" value="ECO:0000314"/>
    <property type="project" value="PseudoCAP"/>
</dbReference>
<dbReference type="GO" id="GO:0000271">
    <property type="term" value="P:polysaccharide biosynthetic process"/>
    <property type="evidence" value="ECO:0000314"/>
    <property type="project" value="UniProtKB"/>
</dbReference>
<dbReference type="CDD" id="cd00438">
    <property type="entry name" value="cupin_RmlC"/>
    <property type="match status" value="1"/>
</dbReference>
<dbReference type="FunFam" id="2.60.120.10:FF:000051">
    <property type="entry name" value="dTDP-4-dehydrorhamnose 3,5-epimerase"/>
    <property type="match status" value="1"/>
</dbReference>
<dbReference type="Gene3D" id="2.60.120.10">
    <property type="entry name" value="Jelly Rolls"/>
    <property type="match status" value="1"/>
</dbReference>
<dbReference type="InterPro" id="IPR000888">
    <property type="entry name" value="RmlC-like"/>
</dbReference>
<dbReference type="InterPro" id="IPR014710">
    <property type="entry name" value="RmlC-like_jellyroll"/>
</dbReference>
<dbReference type="InterPro" id="IPR011051">
    <property type="entry name" value="RmlC_Cupin_sf"/>
</dbReference>
<dbReference type="NCBIfam" id="TIGR01221">
    <property type="entry name" value="rmlC"/>
    <property type="match status" value="1"/>
</dbReference>
<dbReference type="PANTHER" id="PTHR21047">
    <property type="entry name" value="DTDP-6-DEOXY-D-GLUCOSE-3,5 EPIMERASE"/>
    <property type="match status" value="1"/>
</dbReference>
<dbReference type="PANTHER" id="PTHR21047:SF2">
    <property type="entry name" value="THYMIDINE DIPHOSPHO-4-KETO-RHAMNOSE 3,5-EPIMERASE"/>
    <property type="match status" value="1"/>
</dbReference>
<dbReference type="Pfam" id="PF00908">
    <property type="entry name" value="dTDP_sugar_isom"/>
    <property type="match status" value="1"/>
</dbReference>
<dbReference type="SUPFAM" id="SSF51182">
    <property type="entry name" value="RmlC-like cupins"/>
    <property type="match status" value="1"/>
</dbReference>
<name>RMLC_PSEAE</name>
<reference key="1">
    <citation type="submission" date="2000-08" db="EMBL/GenBank/DDBJ databases">
        <title>Cloning and characterization of the rmlC gene of Pseudomonas aeruginosa.</title>
        <authorList>
            <person name="Maeki M."/>
        </authorList>
    </citation>
    <scope>NUCLEOTIDE SEQUENCE [GENOMIC DNA]</scope>
    <source>
        <strain>ATCC 15692 / DSM 22644 / CIP 104116 / JCM 14847 / LMG 12228 / 1C / PRS 101 / PAO1</strain>
    </source>
</reference>
<reference key="2">
    <citation type="journal article" date="2000" name="Nature">
        <title>Complete genome sequence of Pseudomonas aeruginosa PAO1, an opportunistic pathogen.</title>
        <authorList>
            <person name="Stover C.K."/>
            <person name="Pham X.-Q.T."/>
            <person name="Erwin A.L."/>
            <person name="Mizoguchi S.D."/>
            <person name="Warrener P."/>
            <person name="Hickey M.J."/>
            <person name="Brinkman F.S.L."/>
            <person name="Hufnagle W.O."/>
            <person name="Kowalik D.J."/>
            <person name="Lagrou M."/>
            <person name="Garber R.L."/>
            <person name="Goltry L."/>
            <person name="Tolentino E."/>
            <person name="Westbrock-Wadman S."/>
            <person name="Yuan Y."/>
            <person name="Brody L.L."/>
            <person name="Coulter S.N."/>
            <person name="Folger K.R."/>
            <person name="Kas A."/>
            <person name="Larbig K."/>
            <person name="Lim R.M."/>
            <person name="Smith K.A."/>
            <person name="Spencer D.H."/>
            <person name="Wong G.K.-S."/>
            <person name="Wu Z."/>
            <person name="Paulsen I.T."/>
            <person name="Reizer J."/>
            <person name="Saier M.H. Jr."/>
            <person name="Hancock R.E.W."/>
            <person name="Lory S."/>
            <person name="Olson M.V."/>
        </authorList>
    </citation>
    <scope>NUCLEOTIDE SEQUENCE [LARGE SCALE GENOMIC DNA]</scope>
    <source>
        <strain>ATCC 15692 / DSM 22644 / CIP 104116 / JCM 14847 / LMG 12228 / 1C / PRS 101 / PAO1</strain>
    </source>
</reference>
<reference key="3">
    <citation type="submission" date="2003-12" db="PDB data bank">
        <title>RmlC (dTDP-6-deoxy-D-xylo-4-hexulose 3,5-epimerase) crystal structure from Pseudomonas aeruginosa, apo structure.</title>
        <authorList>
            <person name="Dong C.J."/>
            <person name="Naismith J.H."/>
        </authorList>
    </citation>
    <scope>X-RAY CRYSTALLOGRAPHY (2.50 ANGSTROMS) IN COMPLEX WITH SUBSTRATE ANALOG</scope>
    <scope>SUBUNIT</scope>
</reference>
<reference key="4">
    <citation type="journal article" date="2007" name="J. Mol. Biol.">
        <title>RmlC, a C3' and C5' carbohydrate epimerase, appears to operate via an intermediate with an unusual twist boat conformation.</title>
        <authorList>
            <person name="Dong C."/>
            <person name="Major L.L."/>
            <person name="Srikannathasan V."/>
            <person name="Errey J.C."/>
            <person name="Giraud M.F."/>
            <person name="Lam J.S."/>
            <person name="Graninger M."/>
            <person name="Messner P."/>
            <person name="McNeil M.R."/>
            <person name="Field R.A."/>
            <person name="Whitfield C."/>
            <person name="Naismith J.H."/>
        </authorList>
    </citation>
    <scope>X-RAY CRYSTALLOGRAPHY (1.79 ANGSTROMS) IN COMPLEX WITH SUBSTRATE ANALOGS</scope>
    <scope>FUNCTION IN DTDP-RHAMNOSE BIOSYNTHESIS</scope>
    <scope>CATALYTIC ACTIVITY</scope>
    <scope>REACTION MECHANISM</scope>
    <scope>ACTIVE SITE</scope>
    <scope>SUBUNIT</scope>
</reference>
<sequence length="181" mass="20766">MKATRLAIPDVILFEPRVFGDDRGFFFESYNQRAFEEACGHPVSFVQDNHSRSARGVLRGLHYQIRQAQGKLVRATLGEVFDVAVDLRRGSPTFGQWVGERLSAENKRQMWIPAGFAHGFVVLSEYAEFLYKTTDFWAPEHERCIVWNDPELKIDWPLQDAPLLSEKDRQGKAFADADCFP</sequence>
<organism>
    <name type="scientific">Pseudomonas aeruginosa (strain ATCC 15692 / DSM 22644 / CIP 104116 / JCM 14847 / LMG 12228 / 1C / PRS 101 / PAO1)</name>
    <dbReference type="NCBI Taxonomy" id="208964"/>
    <lineage>
        <taxon>Bacteria</taxon>
        <taxon>Pseudomonadati</taxon>
        <taxon>Pseudomonadota</taxon>
        <taxon>Gammaproteobacteria</taxon>
        <taxon>Pseudomonadales</taxon>
        <taxon>Pseudomonadaceae</taxon>
        <taxon>Pseudomonas</taxon>
    </lineage>
</organism>
<comment type="function">
    <text evidence="3">Catalyzes the epimerization of the C3' and C5'positions of dTDP-6-deoxy-D-xylo-4-hexulose, forming dTDP-6-deoxy-L-lyxo-4-hexulose.</text>
</comment>
<comment type="catalytic activity">
    <reaction evidence="7">
        <text>dTDP-4-dehydro-6-deoxy-alpha-D-glucose = dTDP-4-dehydro-beta-L-rhamnose</text>
        <dbReference type="Rhea" id="RHEA:16969"/>
        <dbReference type="ChEBI" id="CHEBI:57649"/>
        <dbReference type="ChEBI" id="CHEBI:62830"/>
        <dbReference type="EC" id="5.1.3.13"/>
    </reaction>
</comment>
<comment type="pathway">
    <text evidence="1">Carbohydrate biosynthesis; dTDP-L-rhamnose biosynthesis.</text>
</comment>
<comment type="pathway">
    <text evidence="1">Bacterial outer membrane biogenesis; lipopolysaccharide biosynthesis.</text>
</comment>
<comment type="subunit">
    <text evidence="3 8">Homodimer.</text>
</comment>
<comment type="similarity">
    <text evidence="6">Belongs to the dTDP-4-dehydrorhamnose 3,5-epimerase family.</text>
</comment>
<feature type="chain" id="PRO_0000395350" description="dTDP-4-dehydrorhamnose 3,5-epimerase">
    <location>
        <begin position="1"/>
        <end position="181"/>
    </location>
</feature>
<feature type="active site" description="Proton acceptor" evidence="7">
    <location>
        <position position="62"/>
    </location>
</feature>
<feature type="active site" description="Proton donor" evidence="7">
    <location>
        <position position="131"/>
    </location>
</feature>
<feature type="binding site" evidence="3 11 13">
    <location>
        <position position="23"/>
    </location>
    <ligand>
        <name>substrate</name>
    </ligand>
</feature>
<feature type="binding site" evidence="3 11 13">
    <location>
        <position position="28"/>
    </location>
    <ligand>
        <name>substrate</name>
    </ligand>
</feature>
<feature type="binding site" evidence="7 10">
    <location>
        <begin position="47"/>
        <end position="49"/>
    </location>
    <ligand>
        <name>substrate</name>
    </ligand>
</feature>
<feature type="binding site" evidence="3 4 9 10 12 13">
    <location>
        <position position="59"/>
    </location>
    <ligand>
        <name>substrate</name>
    </ligand>
</feature>
<feature type="binding site" evidence="3 4 9 10 11 12 13">
    <location>
        <position position="71"/>
    </location>
    <ligand>
        <name>substrate</name>
    </ligand>
</feature>
<feature type="binding site" evidence="3 4 9 10 11 12 13">
    <location>
        <position position="118"/>
    </location>
    <ligand>
        <name>substrate</name>
    </ligand>
</feature>
<feature type="binding site" evidence="3 4 9 12">
    <location>
        <position position="142"/>
    </location>
    <ligand>
        <name>substrate</name>
    </ligand>
</feature>
<feature type="binding site" evidence="3 10 13">
    <location>
        <position position="167"/>
    </location>
    <ligand>
        <name>substrate</name>
    </ligand>
</feature>
<feature type="site" description="Participates in a stacking interaction with the thymidine ring of dTDP-4-oxo-6-deoxyglucose" evidence="2">
    <location>
        <position position="137"/>
    </location>
</feature>
<feature type="strand" evidence="14">
    <location>
        <begin position="2"/>
        <end position="5"/>
    </location>
</feature>
<feature type="strand" evidence="14">
    <location>
        <begin position="11"/>
        <end position="15"/>
    </location>
</feature>
<feature type="strand" evidence="14">
    <location>
        <begin position="18"/>
        <end position="21"/>
    </location>
</feature>
<feature type="strand" evidence="14">
    <location>
        <begin position="24"/>
        <end position="31"/>
    </location>
</feature>
<feature type="helix" evidence="14">
    <location>
        <begin position="32"/>
        <end position="39"/>
    </location>
</feature>
<feature type="strand" evidence="14">
    <location>
        <begin position="47"/>
        <end position="54"/>
    </location>
</feature>
<feature type="strand" evidence="14">
    <location>
        <begin position="57"/>
        <end position="67"/>
    </location>
</feature>
<feature type="strand" evidence="14">
    <location>
        <begin position="71"/>
        <end position="86"/>
    </location>
</feature>
<feature type="turn" evidence="14">
    <location>
        <begin position="92"/>
        <end position="95"/>
    </location>
</feature>
<feature type="strand" evidence="14">
    <location>
        <begin position="97"/>
        <end position="103"/>
    </location>
</feature>
<feature type="turn" evidence="14">
    <location>
        <begin position="104"/>
        <end position="106"/>
    </location>
</feature>
<feature type="strand" evidence="14">
    <location>
        <begin position="109"/>
        <end position="112"/>
    </location>
</feature>
<feature type="strand" evidence="14">
    <location>
        <begin position="116"/>
        <end position="122"/>
    </location>
</feature>
<feature type="strand" evidence="14">
    <location>
        <begin position="124"/>
        <end position="135"/>
    </location>
</feature>
<feature type="helix" evidence="14">
    <location>
        <begin position="139"/>
        <end position="141"/>
    </location>
</feature>
<feature type="strand" evidence="14">
    <location>
        <begin position="142"/>
        <end position="145"/>
    </location>
</feature>
<feature type="turn" evidence="14">
    <location>
        <begin position="150"/>
        <end position="152"/>
    </location>
</feature>
<feature type="helix" evidence="14">
    <location>
        <begin position="166"/>
        <end position="169"/>
    </location>
</feature>
<feature type="helix" evidence="14">
    <location>
        <begin position="174"/>
        <end position="176"/>
    </location>
</feature>
<protein>
    <recommendedName>
        <fullName evidence="7">dTDP-4-dehydrorhamnose 3,5-epimerase</fullName>
        <ecNumber evidence="7">5.1.3.13</ecNumber>
    </recommendedName>
    <alternativeName>
        <fullName evidence="7">Thymidine diphospho-4-keto-rhamnose 3,5-epimerase</fullName>
    </alternativeName>
    <alternativeName>
        <fullName evidence="6">dTDP-4-keto-6-deoxyglucose 3,5-epimerase</fullName>
    </alternativeName>
    <alternativeName>
        <fullName evidence="5">dTDP-6-deoxy-D-xylo-4-hexulose 3,5-epimerase</fullName>
    </alternativeName>
    <alternativeName>
        <fullName evidence="7">dTDP-L-rhamnose synthase</fullName>
    </alternativeName>
</protein>
<keyword id="KW-0002">3D-structure</keyword>
<keyword id="KW-0119">Carbohydrate metabolism</keyword>
<keyword id="KW-0413">Isomerase</keyword>
<keyword id="KW-0448">Lipopolysaccharide biosynthesis</keyword>
<keyword id="KW-1185">Reference proteome</keyword>
<accession>Q9HU21</accession>
<accession>Q7AYQ8</accession>